<proteinExistence type="inferred from homology"/>
<organism>
    <name type="scientific">Cafeteria roenbergensis</name>
    <name type="common">Marine flagellate</name>
    <dbReference type="NCBI Taxonomy" id="33653"/>
    <lineage>
        <taxon>Eukaryota</taxon>
        <taxon>Sar</taxon>
        <taxon>Stramenopiles</taxon>
        <taxon>Bigyra</taxon>
        <taxon>Opalozoa</taxon>
        <taxon>Bicosoecida</taxon>
        <taxon>Cafeteriaceae</taxon>
        <taxon>Cafeteria</taxon>
    </lineage>
</organism>
<gene>
    <name type="primary">NAD7</name>
</gene>
<feature type="chain" id="PRO_0000118588" description="NADH-ubiquinone oxidoreductase 49 kDa subunit">
    <location>
        <begin position="1"/>
        <end position="398"/>
    </location>
</feature>
<sequence length="398" mass="45813">MFIKRKLKETEIKDFTLNFGPQHPAAHGVLRLILELNGETIKNADPHIGLLHRGTEKLIENRNYLQALPYFDRLDYVSMMVQEHAYSLAVERLYGINIPQRAQWIRVLFSEITRILNHLLAIGCHSMDVGAMTPLLWGFEEREKLMEFYERVSGARMHASYIRPGGVAQDLPSGFVEDVYSFILDFSVRLDEIEELLTNNRIWKQRLVNVGIVTAKQAIQNGFSGVLLRSTGIPWDLRRSQPYEIYDKVPFRIPVGTRGDCYDRYLIRMQEMRQSLRIMMACLKYLPGGSIKSDDKKFVPPLRWEMKNSMESVIHHFKYFTEGFKVPAGQTYAAVEAPKGEMGVFLISDGSNQPFRCKIKAPGFFHLQNLPEMTKHHMIADVVTIIGTQDIVFGEVDR</sequence>
<comment type="function">
    <text evidence="1">Core subunit of the mitochondrial membrane respiratory chain NADH dehydrogenase (Complex I) that is believed to belong to the minimal assembly required for catalysis. Complex I functions in the transfer of electrons from NADH to the respiratory chain. The immediate electron acceptor for the enzyme is believed to be ubiquinone (By similarity). Component of the iron-sulfur (IP) fragment of the enzyme. Component of the iron-sulfur (IP) fragment of the enzyme (By similarity).</text>
</comment>
<comment type="catalytic activity">
    <reaction>
        <text>a ubiquinone + NADH + 5 H(+)(in) = a ubiquinol + NAD(+) + 4 H(+)(out)</text>
        <dbReference type="Rhea" id="RHEA:29091"/>
        <dbReference type="Rhea" id="RHEA-COMP:9565"/>
        <dbReference type="Rhea" id="RHEA-COMP:9566"/>
        <dbReference type="ChEBI" id="CHEBI:15378"/>
        <dbReference type="ChEBI" id="CHEBI:16389"/>
        <dbReference type="ChEBI" id="CHEBI:17976"/>
        <dbReference type="ChEBI" id="CHEBI:57540"/>
        <dbReference type="ChEBI" id="CHEBI:57945"/>
        <dbReference type="EC" id="7.1.1.2"/>
    </reaction>
</comment>
<comment type="subcellular location">
    <subcellularLocation>
        <location>Mitochondrion</location>
    </subcellularLocation>
</comment>
<comment type="similarity">
    <text evidence="2">Belongs to the complex I 49 kDa subunit family.</text>
</comment>
<accession>Q9TAJ7</accession>
<name>NDUS2_CAFRO</name>
<evidence type="ECO:0000250" key="1"/>
<evidence type="ECO:0000305" key="2"/>
<keyword id="KW-0249">Electron transport</keyword>
<keyword id="KW-0496">Mitochondrion</keyword>
<keyword id="KW-0520">NAD</keyword>
<keyword id="KW-0560">Oxidoreductase</keyword>
<keyword id="KW-0679">Respiratory chain</keyword>
<keyword id="KW-1278">Translocase</keyword>
<keyword id="KW-0813">Transport</keyword>
<keyword id="KW-0830">Ubiquinone</keyword>
<protein>
    <recommendedName>
        <fullName>NADH-ubiquinone oxidoreductase 49 kDa subunit</fullName>
        <ecNumber>7.1.1.2</ecNumber>
    </recommendedName>
    <alternativeName>
        <fullName>NADH dehydrogenase subunit 7</fullName>
    </alternativeName>
</protein>
<geneLocation type="mitochondrion"/>
<reference key="1">
    <citation type="submission" date="1999-10" db="EMBL/GenBank/DDBJ databases">
        <title>The mitochondrial genome of Cafeteria roenbergensis.</title>
        <authorList>
            <person name="Burger G."/>
        </authorList>
    </citation>
    <scope>NUCLEOTIDE SEQUENCE [GENOMIC DNA]</scope>
</reference>
<dbReference type="EC" id="7.1.1.2"/>
<dbReference type="EMBL" id="AF193903">
    <property type="protein sequence ID" value="AAF05789.1"/>
    <property type="molecule type" value="Genomic_DNA"/>
</dbReference>
<dbReference type="RefSeq" id="NP_051138.1">
    <property type="nucleotide sequence ID" value="NC_000946.1"/>
</dbReference>
<dbReference type="SMR" id="Q9TAJ7"/>
<dbReference type="GeneID" id="800841"/>
<dbReference type="GO" id="GO:0005739">
    <property type="term" value="C:mitochondrion"/>
    <property type="evidence" value="ECO:0007669"/>
    <property type="project" value="UniProtKB-SubCell"/>
</dbReference>
<dbReference type="GO" id="GO:0051287">
    <property type="term" value="F:NAD binding"/>
    <property type="evidence" value="ECO:0007669"/>
    <property type="project" value="InterPro"/>
</dbReference>
<dbReference type="GO" id="GO:0008137">
    <property type="term" value="F:NADH dehydrogenase (ubiquinone) activity"/>
    <property type="evidence" value="ECO:0007669"/>
    <property type="project" value="UniProtKB-EC"/>
</dbReference>
<dbReference type="GO" id="GO:0048038">
    <property type="term" value="F:quinone binding"/>
    <property type="evidence" value="ECO:0007669"/>
    <property type="project" value="InterPro"/>
</dbReference>
<dbReference type="GO" id="GO:0006120">
    <property type="term" value="P:mitochondrial electron transport, NADH to ubiquinone"/>
    <property type="evidence" value="ECO:0007669"/>
    <property type="project" value="TreeGrafter"/>
</dbReference>
<dbReference type="FunFam" id="1.10.645.10:FF:000005">
    <property type="entry name" value="NADH-quinone oxidoreductase subunit D"/>
    <property type="match status" value="1"/>
</dbReference>
<dbReference type="Gene3D" id="1.10.645.10">
    <property type="entry name" value="Cytochrome-c3 Hydrogenase, chain B"/>
    <property type="match status" value="1"/>
</dbReference>
<dbReference type="HAMAP" id="MF_01358">
    <property type="entry name" value="NDH1_NuoD"/>
    <property type="match status" value="1"/>
</dbReference>
<dbReference type="InterPro" id="IPR001135">
    <property type="entry name" value="NADH_Q_OxRdtase_suD"/>
</dbReference>
<dbReference type="InterPro" id="IPR014029">
    <property type="entry name" value="NADH_UbQ_OxRdtase_49kDa_CS"/>
</dbReference>
<dbReference type="InterPro" id="IPR022885">
    <property type="entry name" value="NDH1_su_D/H"/>
</dbReference>
<dbReference type="InterPro" id="IPR029014">
    <property type="entry name" value="NiFe-Hase_large"/>
</dbReference>
<dbReference type="NCBIfam" id="TIGR01962">
    <property type="entry name" value="NuoD"/>
    <property type="match status" value="1"/>
</dbReference>
<dbReference type="NCBIfam" id="NF004739">
    <property type="entry name" value="PRK06075.1"/>
    <property type="match status" value="1"/>
</dbReference>
<dbReference type="PANTHER" id="PTHR11993:SF10">
    <property type="entry name" value="NADH DEHYDROGENASE [UBIQUINONE] IRON-SULFUR PROTEIN 2, MITOCHONDRIAL"/>
    <property type="match status" value="1"/>
</dbReference>
<dbReference type="PANTHER" id="PTHR11993">
    <property type="entry name" value="NADH-UBIQUINONE OXIDOREDUCTASE 49 KDA SUBUNIT"/>
    <property type="match status" value="1"/>
</dbReference>
<dbReference type="Pfam" id="PF00346">
    <property type="entry name" value="Complex1_49kDa"/>
    <property type="match status" value="1"/>
</dbReference>
<dbReference type="SUPFAM" id="SSF56762">
    <property type="entry name" value="HydB/Nqo4-like"/>
    <property type="match status" value="1"/>
</dbReference>
<dbReference type="PROSITE" id="PS00535">
    <property type="entry name" value="COMPLEX1_49K"/>
    <property type="match status" value="1"/>
</dbReference>